<organism>
    <name type="scientific">Schizosaccharomyces pombe (strain 972 / ATCC 24843)</name>
    <name type="common">Fission yeast</name>
    <dbReference type="NCBI Taxonomy" id="284812"/>
    <lineage>
        <taxon>Eukaryota</taxon>
        <taxon>Fungi</taxon>
        <taxon>Dikarya</taxon>
        <taxon>Ascomycota</taxon>
        <taxon>Taphrinomycotina</taxon>
        <taxon>Schizosaccharomycetes</taxon>
        <taxon>Schizosaccharomycetales</taxon>
        <taxon>Schizosaccharomycetaceae</taxon>
        <taxon>Schizosaccharomyces</taxon>
    </lineage>
</organism>
<proteinExistence type="predicted"/>
<keyword id="KW-0010">Activator</keyword>
<keyword id="KW-0238">DNA-binding</keyword>
<keyword id="KW-0479">Metal-binding</keyword>
<keyword id="KW-0539">Nucleus</keyword>
<keyword id="KW-1185">Reference proteome</keyword>
<keyword id="KW-0804">Transcription</keyword>
<keyword id="KW-0805">Transcription regulation</keyword>
<keyword id="KW-0862">Zinc</keyword>
<keyword id="KW-0863">Zinc-finger</keyword>
<dbReference type="EMBL" id="X77518">
    <property type="protein sequence ID" value="CAA54653.1"/>
    <property type="molecule type" value="Genomic_DNA"/>
</dbReference>
<dbReference type="EMBL" id="CU329671">
    <property type="protein sequence ID" value="CAA21164.1"/>
    <property type="molecule type" value="Genomic_DNA"/>
</dbReference>
<dbReference type="PIR" id="T45219">
    <property type="entry name" value="T45219"/>
</dbReference>
<dbReference type="RefSeq" id="NP_596225.1">
    <property type="nucleotide sequence ID" value="NM_001022145.2"/>
</dbReference>
<dbReference type="SMR" id="P40379"/>
<dbReference type="BioGRID" id="276961">
    <property type="interactions" value="17"/>
</dbReference>
<dbReference type="STRING" id="284812.P40379"/>
<dbReference type="PaxDb" id="4896-SPBC2D10.06.1"/>
<dbReference type="EnsemblFungi" id="SPBC2D10.06.1">
    <property type="protein sequence ID" value="SPBC2D10.06.1:pep"/>
    <property type="gene ID" value="SPBC2D10.06"/>
</dbReference>
<dbReference type="GeneID" id="2540433"/>
<dbReference type="KEGG" id="spo:2540433"/>
<dbReference type="PomBase" id="SPBC2D10.06"/>
<dbReference type="VEuPathDB" id="FungiDB:SPBC2D10.06"/>
<dbReference type="HOGENOM" id="CLU_615621_0_0_1"/>
<dbReference type="InParanoid" id="P40379"/>
<dbReference type="OMA" id="MQRSATW"/>
<dbReference type="PRO" id="PR:P40379"/>
<dbReference type="Proteomes" id="UP000002485">
    <property type="component" value="Chromosome II"/>
</dbReference>
<dbReference type="GO" id="GO:0005634">
    <property type="term" value="C:nucleus"/>
    <property type="evidence" value="ECO:0007005"/>
    <property type="project" value="PomBase"/>
</dbReference>
<dbReference type="GO" id="GO:0000978">
    <property type="term" value="F:RNA polymerase II cis-regulatory region sequence-specific DNA binding"/>
    <property type="evidence" value="ECO:0000269"/>
    <property type="project" value="PomBase"/>
</dbReference>
<dbReference type="GO" id="GO:0003713">
    <property type="term" value="F:transcription coactivator activity"/>
    <property type="evidence" value="ECO:0000315"/>
    <property type="project" value="PomBase"/>
</dbReference>
<dbReference type="GO" id="GO:0008270">
    <property type="term" value="F:zinc ion binding"/>
    <property type="evidence" value="ECO:0007669"/>
    <property type="project" value="UniProtKB-KW"/>
</dbReference>
<dbReference type="GO" id="GO:0006357">
    <property type="term" value="P:regulation of transcription by RNA polymerase II"/>
    <property type="evidence" value="ECO:0000315"/>
    <property type="project" value="PomBase"/>
</dbReference>
<dbReference type="InterPro" id="IPR013087">
    <property type="entry name" value="Znf_C2H2_type"/>
</dbReference>
<dbReference type="PROSITE" id="PS00028">
    <property type="entry name" value="ZINC_FINGER_C2H2_1"/>
    <property type="match status" value="1"/>
</dbReference>
<sequence length="472" mass="52618">MDSDRCLTDEISLNTLSSTFASDNNLRRKENFLKSRYPSKFDLNVSMLTKSDDVGKTPFSIFDSPSNPGFSRSHQMCSDKNKSPFLFDKIRDEPVSVDPVKLIINNRNKRKINRQKSRLQGLYRSDANGLQPLNSENVKMKKSTALSLTSSPLNSWKTDFKTPPKANVVCISLVIEGDGCASLLYEDLNQISNSCPEVAPNRQNALFSDETLTTMFYSGVTEDEGSCNNLLQSSFGDDLDLGMQRSATWAPGYNYPSKFDSIPFASASPKIKAAFPFDPNVYALNTNDGPVTSTDNNCDQLNTRMQAWNNGFNYSNLNGDIQYPAVTPKFFQQEGRALNVSDCNFGNEEIAYGGIPMRVCHSDSTLCDARIAAKQALKGKRQYDTSTSKAELSTPPSKRRHIDDADLVFHSSPLLSRSRFICCYCTKPFLSISKLQEHESSCSHVERLFGFAPNRLYDDGDGFLGSSFCSDW</sequence>
<reference key="1">
    <citation type="journal article" date="1994" name="EMBO J.">
        <title>A zinc finger protein controls the onset of premeiotic DNA synthesis of fission yeast in a Mei2-independent cascade.</title>
        <authorList>
            <person name="Sugiyama A."/>
            <person name="Tanaka K."/>
            <person name="Okazaki K."/>
            <person name="Nojima H."/>
            <person name="Okayama H."/>
        </authorList>
    </citation>
    <scope>NUCLEOTIDE SEQUENCE [GENOMIC DNA]</scope>
    <source>
        <strain>972 / ATCC 24843</strain>
    </source>
</reference>
<reference key="2">
    <citation type="journal article" date="1998" name="Mol. Gen. Genet.">
        <title>Global control of meiotic recombination genes by Schizosaccharomyces pombe rec16 (rep1).</title>
        <authorList>
            <person name="Ding R."/>
            <person name="Smith G.R."/>
        </authorList>
    </citation>
    <scope>NUCLEOTIDE SEQUENCE [GENOMIC DNA]</scope>
    <scope>FUNCTION</scope>
    <scope>GENE NAME</scope>
</reference>
<reference key="3">
    <citation type="journal article" date="2002" name="Nature">
        <title>The genome sequence of Schizosaccharomyces pombe.</title>
        <authorList>
            <person name="Wood V."/>
            <person name="Gwilliam R."/>
            <person name="Rajandream M.A."/>
            <person name="Lyne M.H."/>
            <person name="Lyne R."/>
            <person name="Stewart A."/>
            <person name="Sgouros J.G."/>
            <person name="Peat N."/>
            <person name="Hayles J."/>
            <person name="Baker S.G."/>
            <person name="Basham D."/>
            <person name="Bowman S."/>
            <person name="Brooks K."/>
            <person name="Brown D."/>
            <person name="Brown S."/>
            <person name="Chillingworth T."/>
            <person name="Churcher C.M."/>
            <person name="Collins M."/>
            <person name="Connor R."/>
            <person name="Cronin A."/>
            <person name="Davis P."/>
            <person name="Feltwell T."/>
            <person name="Fraser A."/>
            <person name="Gentles S."/>
            <person name="Goble A."/>
            <person name="Hamlin N."/>
            <person name="Harris D.E."/>
            <person name="Hidalgo J."/>
            <person name="Hodgson G."/>
            <person name="Holroyd S."/>
            <person name="Hornsby T."/>
            <person name="Howarth S."/>
            <person name="Huckle E.J."/>
            <person name="Hunt S."/>
            <person name="Jagels K."/>
            <person name="James K.D."/>
            <person name="Jones L."/>
            <person name="Jones M."/>
            <person name="Leather S."/>
            <person name="McDonald S."/>
            <person name="McLean J."/>
            <person name="Mooney P."/>
            <person name="Moule S."/>
            <person name="Mungall K.L."/>
            <person name="Murphy L.D."/>
            <person name="Niblett D."/>
            <person name="Odell C."/>
            <person name="Oliver K."/>
            <person name="O'Neil S."/>
            <person name="Pearson D."/>
            <person name="Quail M.A."/>
            <person name="Rabbinowitsch E."/>
            <person name="Rutherford K.M."/>
            <person name="Rutter S."/>
            <person name="Saunders D."/>
            <person name="Seeger K."/>
            <person name="Sharp S."/>
            <person name="Skelton J."/>
            <person name="Simmonds M.N."/>
            <person name="Squares R."/>
            <person name="Squares S."/>
            <person name="Stevens K."/>
            <person name="Taylor K."/>
            <person name="Taylor R.G."/>
            <person name="Tivey A."/>
            <person name="Walsh S.V."/>
            <person name="Warren T."/>
            <person name="Whitehead S."/>
            <person name="Woodward J.R."/>
            <person name="Volckaert G."/>
            <person name="Aert R."/>
            <person name="Robben J."/>
            <person name="Grymonprez B."/>
            <person name="Weltjens I."/>
            <person name="Vanstreels E."/>
            <person name="Rieger M."/>
            <person name="Schaefer M."/>
            <person name="Mueller-Auer S."/>
            <person name="Gabel C."/>
            <person name="Fuchs M."/>
            <person name="Duesterhoeft A."/>
            <person name="Fritzc C."/>
            <person name="Holzer E."/>
            <person name="Moestl D."/>
            <person name="Hilbert H."/>
            <person name="Borzym K."/>
            <person name="Langer I."/>
            <person name="Beck A."/>
            <person name="Lehrach H."/>
            <person name="Reinhardt R."/>
            <person name="Pohl T.M."/>
            <person name="Eger P."/>
            <person name="Zimmermann W."/>
            <person name="Wedler H."/>
            <person name="Wambutt R."/>
            <person name="Purnelle B."/>
            <person name="Goffeau A."/>
            <person name="Cadieu E."/>
            <person name="Dreano S."/>
            <person name="Gloux S."/>
            <person name="Lelaure V."/>
            <person name="Mottier S."/>
            <person name="Galibert F."/>
            <person name="Aves S.J."/>
            <person name="Xiang Z."/>
            <person name="Hunt C."/>
            <person name="Moore K."/>
            <person name="Hurst S.M."/>
            <person name="Lucas M."/>
            <person name="Rochet M."/>
            <person name="Gaillardin C."/>
            <person name="Tallada V.A."/>
            <person name="Garzon A."/>
            <person name="Thode G."/>
            <person name="Daga R.R."/>
            <person name="Cruzado L."/>
            <person name="Jimenez J."/>
            <person name="Sanchez M."/>
            <person name="del Rey F."/>
            <person name="Benito J."/>
            <person name="Dominguez A."/>
            <person name="Revuelta J.L."/>
            <person name="Moreno S."/>
            <person name="Armstrong J."/>
            <person name="Forsburg S.L."/>
            <person name="Cerutti L."/>
            <person name="Lowe T."/>
            <person name="McCombie W.R."/>
            <person name="Paulsen I."/>
            <person name="Potashkin J."/>
            <person name="Shpakovski G.V."/>
            <person name="Ussery D."/>
            <person name="Barrell B.G."/>
            <person name="Nurse P."/>
        </authorList>
    </citation>
    <scope>NUCLEOTIDE SEQUENCE [LARGE SCALE GENOMIC DNA]</scope>
    <source>
        <strain>972 / ATCC 24843</strain>
    </source>
</reference>
<accession>P40379</accession>
<gene>
    <name type="primary">rec16</name>
    <name type="synonym">rep1</name>
    <name type="ORF">SPBC2D10.06</name>
</gene>
<feature type="chain" id="PRO_0000046816" description="Transcriptional activator protein rec16">
    <location>
        <begin position="1"/>
        <end position="472"/>
    </location>
</feature>
<feature type="zinc finger region" description="C2H2-type">
    <location>
        <begin position="420"/>
        <end position="444"/>
    </location>
</feature>
<protein>
    <recommendedName>
        <fullName>Transcriptional activator protein rec16</fullName>
    </recommendedName>
    <alternativeName>
        <fullName>Zinc finger protein rep1</fullName>
    </alternativeName>
</protein>
<comment type="function">
    <text evidence="1">Transcriptional activator that controls the onset of premeiotic DNA synthesis by regulating res2 and some other factor(s) in a mei2 independent cascade.</text>
</comment>
<comment type="subcellular location">
    <subcellularLocation>
        <location evidence="2">Nucleus</location>
    </subcellularLocation>
</comment>
<evidence type="ECO:0000269" key="1">
    <source>
    </source>
</evidence>
<evidence type="ECO:0000305" key="2"/>
<name>REC16_SCHPO</name>